<feature type="chain" id="PRO_1000192460" description="Transcription antitermination protein NusB">
    <location>
        <begin position="1"/>
        <end position="140"/>
    </location>
</feature>
<name>NUSB_STRPJ</name>
<comment type="function">
    <text evidence="1">Involved in transcription antitermination. Required for transcription of ribosomal RNA (rRNA) genes. Binds specifically to the boxA antiterminator sequence of the ribosomal RNA (rrn) operons.</text>
</comment>
<comment type="similarity">
    <text evidence="1">Belongs to the NusB family.</text>
</comment>
<gene>
    <name evidence="1" type="primary">nusB</name>
    <name type="ordered locus">SPN23F04060</name>
</gene>
<keyword id="KW-0694">RNA-binding</keyword>
<keyword id="KW-0804">Transcription</keyword>
<keyword id="KW-0889">Transcription antitermination</keyword>
<keyword id="KW-0805">Transcription regulation</keyword>
<proteinExistence type="inferred from homology"/>
<dbReference type="EMBL" id="FM211187">
    <property type="protein sequence ID" value="CAR68255.1"/>
    <property type="molecule type" value="Genomic_DNA"/>
</dbReference>
<dbReference type="RefSeq" id="WP_000203654.1">
    <property type="nucleotide sequence ID" value="NC_011900.1"/>
</dbReference>
<dbReference type="SMR" id="B8ZLJ7"/>
<dbReference type="GeneID" id="45652116"/>
<dbReference type="KEGG" id="sne:SPN23F04060"/>
<dbReference type="HOGENOM" id="CLU_087843_3_2_9"/>
<dbReference type="GO" id="GO:0005829">
    <property type="term" value="C:cytosol"/>
    <property type="evidence" value="ECO:0007669"/>
    <property type="project" value="TreeGrafter"/>
</dbReference>
<dbReference type="GO" id="GO:0003723">
    <property type="term" value="F:RNA binding"/>
    <property type="evidence" value="ECO:0007669"/>
    <property type="project" value="UniProtKB-UniRule"/>
</dbReference>
<dbReference type="GO" id="GO:0006353">
    <property type="term" value="P:DNA-templated transcription termination"/>
    <property type="evidence" value="ECO:0007669"/>
    <property type="project" value="UniProtKB-UniRule"/>
</dbReference>
<dbReference type="GO" id="GO:0031564">
    <property type="term" value="P:transcription antitermination"/>
    <property type="evidence" value="ECO:0007669"/>
    <property type="project" value="UniProtKB-KW"/>
</dbReference>
<dbReference type="FunFam" id="1.10.940.10:FF:000008">
    <property type="entry name" value="Transcription antitermination protein NusB"/>
    <property type="match status" value="1"/>
</dbReference>
<dbReference type="Gene3D" id="1.10.940.10">
    <property type="entry name" value="NusB-like"/>
    <property type="match status" value="1"/>
</dbReference>
<dbReference type="HAMAP" id="MF_00073">
    <property type="entry name" value="NusB"/>
    <property type="match status" value="1"/>
</dbReference>
<dbReference type="InterPro" id="IPR035926">
    <property type="entry name" value="NusB-like_sf"/>
</dbReference>
<dbReference type="InterPro" id="IPR011605">
    <property type="entry name" value="NusB_fam"/>
</dbReference>
<dbReference type="InterPro" id="IPR006027">
    <property type="entry name" value="NusB_RsmB_TIM44"/>
</dbReference>
<dbReference type="NCBIfam" id="TIGR01951">
    <property type="entry name" value="nusB"/>
    <property type="match status" value="1"/>
</dbReference>
<dbReference type="NCBIfam" id="NF001223">
    <property type="entry name" value="PRK00202.1-1"/>
    <property type="match status" value="1"/>
</dbReference>
<dbReference type="PANTHER" id="PTHR11078:SF3">
    <property type="entry name" value="ANTITERMINATION NUSB DOMAIN-CONTAINING PROTEIN"/>
    <property type="match status" value="1"/>
</dbReference>
<dbReference type="PANTHER" id="PTHR11078">
    <property type="entry name" value="N UTILIZATION SUBSTANCE PROTEIN B-RELATED"/>
    <property type="match status" value="1"/>
</dbReference>
<dbReference type="Pfam" id="PF01029">
    <property type="entry name" value="NusB"/>
    <property type="match status" value="1"/>
</dbReference>
<dbReference type="SUPFAM" id="SSF48013">
    <property type="entry name" value="NusB-like"/>
    <property type="match status" value="1"/>
</dbReference>
<accession>B8ZLJ7</accession>
<protein>
    <recommendedName>
        <fullName evidence="1">Transcription antitermination protein NusB</fullName>
    </recommendedName>
    <alternativeName>
        <fullName evidence="1">Antitermination factor NusB</fullName>
    </alternativeName>
</protein>
<evidence type="ECO:0000255" key="1">
    <source>
        <dbReference type="HAMAP-Rule" id="MF_00073"/>
    </source>
</evidence>
<sequence length="140" mass="15964">MTSPLLESRRQLRKCAFQALMSLEFGTDVETACRFAYTHDREDTDVQLPAFLIDLVSGVQAKKEELDKQITQHLKAGWTIERLTLVERNLLRLGVFEITSFDTPQLVAVNEAIELAKDFSDQKSARFINGLLSQFVTEEQ</sequence>
<organism>
    <name type="scientific">Streptococcus pneumoniae (strain ATCC 700669 / Spain 23F-1)</name>
    <dbReference type="NCBI Taxonomy" id="561276"/>
    <lineage>
        <taxon>Bacteria</taxon>
        <taxon>Bacillati</taxon>
        <taxon>Bacillota</taxon>
        <taxon>Bacilli</taxon>
        <taxon>Lactobacillales</taxon>
        <taxon>Streptococcaceae</taxon>
        <taxon>Streptococcus</taxon>
    </lineage>
</organism>
<reference key="1">
    <citation type="journal article" date="2009" name="J. Bacteriol.">
        <title>Role of conjugative elements in the evolution of the multidrug-resistant pandemic clone Streptococcus pneumoniae Spain23F ST81.</title>
        <authorList>
            <person name="Croucher N.J."/>
            <person name="Walker D."/>
            <person name="Romero P."/>
            <person name="Lennard N."/>
            <person name="Paterson G.K."/>
            <person name="Bason N.C."/>
            <person name="Mitchell A.M."/>
            <person name="Quail M.A."/>
            <person name="Andrew P.W."/>
            <person name="Parkhill J."/>
            <person name="Bentley S.D."/>
            <person name="Mitchell T.J."/>
        </authorList>
    </citation>
    <scope>NUCLEOTIDE SEQUENCE [LARGE SCALE GENOMIC DNA]</scope>
    <source>
        <strain>ATCC 700669 / Spain 23F-1</strain>
    </source>
</reference>